<feature type="chain" id="PRO_1000198524" description="UPF0342 protein LAF_1331">
    <location>
        <begin position="1"/>
        <end position="120"/>
    </location>
</feature>
<sequence>MVVNIYDTANELERQMRQTQEFIGLKEAFDDLKADKEATDLFVKFQAKQAAAQQKQMQGQEISEDEIKEIQALAKDVTSKDVIQALMAKEQQVDQMIQQLNQIITGPLQELYKQFGPQEG</sequence>
<comment type="similarity">
    <text evidence="1">Belongs to the UPF0342 family.</text>
</comment>
<organism>
    <name type="scientific">Limosilactobacillus fermentum (strain NBRC 3956 / LMG 18251)</name>
    <name type="common">Lactobacillus fermentum</name>
    <dbReference type="NCBI Taxonomy" id="334390"/>
    <lineage>
        <taxon>Bacteria</taxon>
        <taxon>Bacillati</taxon>
        <taxon>Bacillota</taxon>
        <taxon>Bacilli</taxon>
        <taxon>Lactobacillales</taxon>
        <taxon>Lactobacillaceae</taxon>
        <taxon>Limosilactobacillus</taxon>
    </lineage>
</organism>
<gene>
    <name type="ordered locus">LAF_1331</name>
</gene>
<protein>
    <recommendedName>
        <fullName evidence="1">UPF0342 protein LAF_1331</fullName>
    </recommendedName>
</protein>
<accession>B2GDD5</accession>
<keyword id="KW-1185">Reference proteome</keyword>
<evidence type="ECO:0000255" key="1">
    <source>
        <dbReference type="HAMAP-Rule" id="MF_01526"/>
    </source>
</evidence>
<reference key="1">
    <citation type="journal article" date="2008" name="DNA Res.">
        <title>Comparative genome analysis of Lactobacillus reuteri and Lactobacillus fermentum reveal a genomic island for reuterin and cobalamin production.</title>
        <authorList>
            <person name="Morita H."/>
            <person name="Toh H."/>
            <person name="Fukuda S."/>
            <person name="Horikawa H."/>
            <person name="Oshima K."/>
            <person name="Suzuki T."/>
            <person name="Murakami M."/>
            <person name="Hisamatsu S."/>
            <person name="Kato Y."/>
            <person name="Takizawa T."/>
            <person name="Fukuoka H."/>
            <person name="Yoshimura T."/>
            <person name="Itoh K."/>
            <person name="O'Sullivan D.J."/>
            <person name="McKay L.L."/>
            <person name="Ohno H."/>
            <person name="Kikuchi J."/>
            <person name="Masaoka T."/>
            <person name="Hattori M."/>
        </authorList>
    </citation>
    <scope>NUCLEOTIDE SEQUENCE [LARGE SCALE GENOMIC DNA]</scope>
    <source>
        <strain>NBRC 3956 / LMG 18251</strain>
    </source>
</reference>
<dbReference type="EMBL" id="AP008937">
    <property type="protein sequence ID" value="BAG27667.1"/>
    <property type="molecule type" value="Genomic_DNA"/>
</dbReference>
<dbReference type="RefSeq" id="WP_003683677.1">
    <property type="nucleotide sequence ID" value="NC_010610.1"/>
</dbReference>
<dbReference type="SMR" id="B2GDD5"/>
<dbReference type="KEGG" id="lfe:LAF_1331"/>
<dbReference type="eggNOG" id="COG3679">
    <property type="taxonomic scope" value="Bacteria"/>
</dbReference>
<dbReference type="HOGENOM" id="CLU_140243_3_1_9"/>
<dbReference type="Proteomes" id="UP000001697">
    <property type="component" value="Chromosome"/>
</dbReference>
<dbReference type="Gene3D" id="1.20.1500.10">
    <property type="entry name" value="YheA/YmcA-like"/>
    <property type="match status" value="1"/>
</dbReference>
<dbReference type="HAMAP" id="MF_01526">
    <property type="entry name" value="UPF0342"/>
    <property type="match status" value="1"/>
</dbReference>
<dbReference type="InterPro" id="IPR010368">
    <property type="entry name" value="Com_YlbF"/>
</dbReference>
<dbReference type="InterPro" id="IPR023378">
    <property type="entry name" value="YheA/YmcA-like_dom_sf"/>
</dbReference>
<dbReference type="Pfam" id="PF06133">
    <property type="entry name" value="Com_YlbF"/>
    <property type="match status" value="1"/>
</dbReference>
<dbReference type="SUPFAM" id="SSF158622">
    <property type="entry name" value="YheA/YmcA-like"/>
    <property type="match status" value="1"/>
</dbReference>
<proteinExistence type="inferred from homology"/>
<name>Y1331_LIMF3</name>